<organism>
    <name type="scientific">Bordetella avium (strain 197N)</name>
    <dbReference type="NCBI Taxonomy" id="360910"/>
    <lineage>
        <taxon>Bacteria</taxon>
        <taxon>Pseudomonadati</taxon>
        <taxon>Pseudomonadota</taxon>
        <taxon>Betaproteobacteria</taxon>
        <taxon>Burkholderiales</taxon>
        <taxon>Alcaligenaceae</taxon>
        <taxon>Bordetella</taxon>
    </lineage>
</organism>
<sequence length="93" mass="10679">MSETQNTQVTKRQRTLVGKVVSNKMDKTVVVLVERRVKHPIYGKIVMRSAKYKAHDESNQYNEGDTVEIAEGRPISRSKAWRVVRLVEAARII</sequence>
<reference key="1">
    <citation type="journal article" date="2006" name="J. Bacteriol.">
        <title>Comparison of the genome sequence of the poultry pathogen Bordetella avium with those of B. bronchiseptica, B. pertussis, and B. parapertussis reveals extensive diversity in surface structures associated with host interaction.</title>
        <authorList>
            <person name="Sebaihia M."/>
            <person name="Preston A."/>
            <person name="Maskell D.J."/>
            <person name="Kuzmiak H."/>
            <person name="Connell T.D."/>
            <person name="King N.D."/>
            <person name="Orndorff P.E."/>
            <person name="Miyamoto D.M."/>
            <person name="Thomson N.R."/>
            <person name="Harris D."/>
            <person name="Goble A."/>
            <person name="Lord A."/>
            <person name="Murphy L."/>
            <person name="Quail M.A."/>
            <person name="Rutter S."/>
            <person name="Squares R."/>
            <person name="Squares S."/>
            <person name="Woodward J."/>
            <person name="Parkhill J."/>
            <person name="Temple L.M."/>
        </authorList>
    </citation>
    <scope>NUCLEOTIDE SEQUENCE [LARGE SCALE GENOMIC DNA]</scope>
    <source>
        <strain>197N</strain>
    </source>
</reference>
<proteinExistence type="inferred from homology"/>
<keyword id="KW-1185">Reference proteome</keyword>
<keyword id="KW-0687">Ribonucleoprotein</keyword>
<keyword id="KW-0689">Ribosomal protein</keyword>
<keyword id="KW-0694">RNA-binding</keyword>
<keyword id="KW-0699">rRNA-binding</keyword>
<gene>
    <name evidence="1" type="primary">rpsQ</name>
    <name type="ordered locus">BAV0034</name>
</gene>
<feature type="chain" id="PRO_0000233435" description="Small ribosomal subunit protein uS17">
    <location>
        <begin position="1"/>
        <end position="93"/>
    </location>
</feature>
<dbReference type="EMBL" id="AM167904">
    <property type="protein sequence ID" value="CAJ47618.1"/>
    <property type="molecule type" value="Genomic_DNA"/>
</dbReference>
<dbReference type="RefSeq" id="WP_012415741.1">
    <property type="nucleotide sequence ID" value="NC_010645.1"/>
</dbReference>
<dbReference type="SMR" id="Q2L2B2"/>
<dbReference type="STRING" id="360910.BAV0034"/>
<dbReference type="GeneID" id="92936721"/>
<dbReference type="KEGG" id="bav:BAV0034"/>
<dbReference type="eggNOG" id="COG0186">
    <property type="taxonomic scope" value="Bacteria"/>
</dbReference>
<dbReference type="HOGENOM" id="CLU_073626_1_1_4"/>
<dbReference type="OrthoDB" id="9811714at2"/>
<dbReference type="Proteomes" id="UP000001977">
    <property type="component" value="Chromosome"/>
</dbReference>
<dbReference type="GO" id="GO:0022627">
    <property type="term" value="C:cytosolic small ribosomal subunit"/>
    <property type="evidence" value="ECO:0007669"/>
    <property type="project" value="TreeGrafter"/>
</dbReference>
<dbReference type="GO" id="GO:0019843">
    <property type="term" value="F:rRNA binding"/>
    <property type="evidence" value="ECO:0007669"/>
    <property type="project" value="UniProtKB-UniRule"/>
</dbReference>
<dbReference type="GO" id="GO:0003735">
    <property type="term" value="F:structural constituent of ribosome"/>
    <property type="evidence" value="ECO:0007669"/>
    <property type="project" value="InterPro"/>
</dbReference>
<dbReference type="GO" id="GO:0006412">
    <property type="term" value="P:translation"/>
    <property type="evidence" value="ECO:0007669"/>
    <property type="project" value="UniProtKB-UniRule"/>
</dbReference>
<dbReference type="CDD" id="cd00364">
    <property type="entry name" value="Ribosomal_uS17"/>
    <property type="match status" value="1"/>
</dbReference>
<dbReference type="Gene3D" id="2.40.50.140">
    <property type="entry name" value="Nucleic acid-binding proteins"/>
    <property type="match status" value="1"/>
</dbReference>
<dbReference type="HAMAP" id="MF_01345_B">
    <property type="entry name" value="Ribosomal_uS17_B"/>
    <property type="match status" value="1"/>
</dbReference>
<dbReference type="InterPro" id="IPR012340">
    <property type="entry name" value="NA-bd_OB-fold"/>
</dbReference>
<dbReference type="InterPro" id="IPR000266">
    <property type="entry name" value="Ribosomal_uS17"/>
</dbReference>
<dbReference type="InterPro" id="IPR019984">
    <property type="entry name" value="Ribosomal_uS17_bact/chlr"/>
</dbReference>
<dbReference type="InterPro" id="IPR019979">
    <property type="entry name" value="Ribosomal_uS17_CS"/>
</dbReference>
<dbReference type="NCBIfam" id="NF004123">
    <property type="entry name" value="PRK05610.1"/>
    <property type="match status" value="1"/>
</dbReference>
<dbReference type="NCBIfam" id="TIGR03635">
    <property type="entry name" value="uS17_bact"/>
    <property type="match status" value="1"/>
</dbReference>
<dbReference type="PANTHER" id="PTHR10744">
    <property type="entry name" value="40S RIBOSOMAL PROTEIN S11 FAMILY MEMBER"/>
    <property type="match status" value="1"/>
</dbReference>
<dbReference type="PANTHER" id="PTHR10744:SF1">
    <property type="entry name" value="SMALL RIBOSOMAL SUBUNIT PROTEIN US17M"/>
    <property type="match status" value="1"/>
</dbReference>
<dbReference type="Pfam" id="PF00366">
    <property type="entry name" value="Ribosomal_S17"/>
    <property type="match status" value="1"/>
</dbReference>
<dbReference type="PRINTS" id="PR00973">
    <property type="entry name" value="RIBOSOMALS17"/>
</dbReference>
<dbReference type="SUPFAM" id="SSF50249">
    <property type="entry name" value="Nucleic acid-binding proteins"/>
    <property type="match status" value="1"/>
</dbReference>
<dbReference type="PROSITE" id="PS00056">
    <property type="entry name" value="RIBOSOMAL_S17"/>
    <property type="match status" value="1"/>
</dbReference>
<evidence type="ECO:0000255" key="1">
    <source>
        <dbReference type="HAMAP-Rule" id="MF_01345"/>
    </source>
</evidence>
<evidence type="ECO:0000305" key="2"/>
<accession>Q2L2B2</accession>
<comment type="function">
    <text evidence="1">One of the primary rRNA binding proteins, it binds specifically to the 5'-end of 16S ribosomal RNA.</text>
</comment>
<comment type="subunit">
    <text evidence="1">Part of the 30S ribosomal subunit.</text>
</comment>
<comment type="similarity">
    <text evidence="1">Belongs to the universal ribosomal protein uS17 family.</text>
</comment>
<name>RS17_BORA1</name>
<protein>
    <recommendedName>
        <fullName evidence="1">Small ribosomal subunit protein uS17</fullName>
    </recommendedName>
    <alternativeName>
        <fullName evidence="2">30S ribosomal protein S17</fullName>
    </alternativeName>
</protein>